<proteinExistence type="inferred from homology"/>
<comment type="function">
    <text evidence="1">Catalyzes the interconversion of 2-phosphoglycerate and 3-phosphoglycerate.</text>
</comment>
<comment type="catalytic activity">
    <reaction evidence="1">
        <text>(2R)-2-phosphoglycerate = (2R)-3-phosphoglycerate</text>
        <dbReference type="Rhea" id="RHEA:15901"/>
        <dbReference type="ChEBI" id="CHEBI:58272"/>
        <dbReference type="ChEBI" id="CHEBI:58289"/>
        <dbReference type="EC" id="5.4.2.12"/>
    </reaction>
</comment>
<comment type="cofactor">
    <cofactor evidence="1">
        <name>Mn(2+)</name>
        <dbReference type="ChEBI" id="CHEBI:29035"/>
    </cofactor>
    <text evidence="1">Binds 2 manganese ions per subunit.</text>
</comment>
<comment type="pathway">
    <text evidence="1">Carbohydrate degradation; glycolysis; pyruvate from D-glyceraldehyde 3-phosphate: step 3/5.</text>
</comment>
<comment type="subunit">
    <text evidence="1">Monomer.</text>
</comment>
<comment type="similarity">
    <text evidence="1">Belongs to the BPG-independent phosphoglycerate mutase family.</text>
</comment>
<comment type="caution">
    <text evidence="2">Seems to be more closely related to protozoan and plant gpmI than to bacterial orthologs.</text>
</comment>
<organism>
    <name type="scientific">Leptospira interrogans serogroup Icterohaemorrhagiae serovar Lai (strain 56601)</name>
    <dbReference type="NCBI Taxonomy" id="189518"/>
    <lineage>
        <taxon>Bacteria</taxon>
        <taxon>Pseudomonadati</taxon>
        <taxon>Spirochaetota</taxon>
        <taxon>Spirochaetia</taxon>
        <taxon>Leptospirales</taxon>
        <taxon>Leptospiraceae</taxon>
        <taxon>Leptospira</taxon>
    </lineage>
</organism>
<protein>
    <recommendedName>
        <fullName evidence="1">Probable 2,3-bisphosphoglycerate-independent phosphoglycerate mutase</fullName>
        <shortName evidence="1">BPG-independent PGAM</shortName>
        <shortName evidence="1">Phosphoglyceromutase</shortName>
        <shortName evidence="1">iPGM</shortName>
        <ecNumber evidence="1">5.4.2.12</ecNumber>
    </recommendedName>
</protein>
<accession>P59173</accession>
<dbReference type="EC" id="5.4.2.12" evidence="1"/>
<dbReference type="EMBL" id="AE010300">
    <property type="protein sequence ID" value="AAN47638.2"/>
    <property type="molecule type" value="Genomic_DNA"/>
</dbReference>
<dbReference type="RefSeq" id="NP_710620.2">
    <property type="nucleotide sequence ID" value="NC_004342.2"/>
</dbReference>
<dbReference type="RefSeq" id="WP_001973414.1">
    <property type="nucleotide sequence ID" value="NC_004342.2"/>
</dbReference>
<dbReference type="SMR" id="P59173"/>
<dbReference type="FunCoup" id="P59173">
    <property type="interactions" value="367"/>
</dbReference>
<dbReference type="STRING" id="189518.LA_0439"/>
<dbReference type="PaxDb" id="189518-LA_0439"/>
<dbReference type="EnsemblBacteria" id="AAN47638">
    <property type="protein sequence ID" value="AAN47638"/>
    <property type="gene ID" value="LA_0439"/>
</dbReference>
<dbReference type="KEGG" id="lil:LA_0439"/>
<dbReference type="PATRIC" id="fig|189518.3.peg.446"/>
<dbReference type="HOGENOM" id="CLU_026099_3_1_12"/>
<dbReference type="InParanoid" id="P59173"/>
<dbReference type="OrthoDB" id="9800863at2"/>
<dbReference type="UniPathway" id="UPA00109">
    <property type="reaction ID" value="UER00186"/>
</dbReference>
<dbReference type="Proteomes" id="UP000001408">
    <property type="component" value="Chromosome I"/>
</dbReference>
<dbReference type="GO" id="GO:0005737">
    <property type="term" value="C:cytoplasm"/>
    <property type="evidence" value="ECO:0007669"/>
    <property type="project" value="InterPro"/>
</dbReference>
<dbReference type="GO" id="GO:0030145">
    <property type="term" value="F:manganese ion binding"/>
    <property type="evidence" value="ECO:0000318"/>
    <property type="project" value="GO_Central"/>
</dbReference>
<dbReference type="GO" id="GO:0004619">
    <property type="term" value="F:phosphoglycerate mutase activity"/>
    <property type="evidence" value="ECO:0000318"/>
    <property type="project" value="GO_Central"/>
</dbReference>
<dbReference type="GO" id="GO:0005975">
    <property type="term" value="P:carbohydrate metabolic process"/>
    <property type="evidence" value="ECO:0000318"/>
    <property type="project" value="GO_Central"/>
</dbReference>
<dbReference type="GO" id="GO:0006007">
    <property type="term" value="P:glucose catabolic process"/>
    <property type="evidence" value="ECO:0007669"/>
    <property type="project" value="InterPro"/>
</dbReference>
<dbReference type="GO" id="GO:0006096">
    <property type="term" value="P:glycolytic process"/>
    <property type="evidence" value="ECO:0007669"/>
    <property type="project" value="UniProtKB-UniPathway"/>
</dbReference>
<dbReference type="CDD" id="cd16010">
    <property type="entry name" value="iPGM"/>
    <property type="match status" value="1"/>
</dbReference>
<dbReference type="FunFam" id="3.40.1450.10:FF:000002">
    <property type="entry name" value="2,3-bisphosphoglycerate-independent phosphoglycerate mutase"/>
    <property type="match status" value="1"/>
</dbReference>
<dbReference type="Gene3D" id="3.40.720.10">
    <property type="entry name" value="Alkaline Phosphatase, subunit A"/>
    <property type="match status" value="1"/>
</dbReference>
<dbReference type="Gene3D" id="3.40.1450.10">
    <property type="entry name" value="BPG-independent phosphoglycerate mutase, domain B"/>
    <property type="match status" value="1"/>
</dbReference>
<dbReference type="InterPro" id="IPR017850">
    <property type="entry name" value="Alkaline_phosphatase_core_sf"/>
</dbReference>
<dbReference type="InterPro" id="IPR011258">
    <property type="entry name" value="BPG-indep_PGM_N"/>
</dbReference>
<dbReference type="InterPro" id="IPR006124">
    <property type="entry name" value="Metalloenzyme"/>
</dbReference>
<dbReference type="InterPro" id="IPR036646">
    <property type="entry name" value="PGAM_B_sf"/>
</dbReference>
<dbReference type="InterPro" id="IPR005995">
    <property type="entry name" value="Pgm_bpd_ind"/>
</dbReference>
<dbReference type="NCBIfam" id="TIGR01307">
    <property type="entry name" value="pgm_bpd_ind"/>
    <property type="match status" value="1"/>
</dbReference>
<dbReference type="PANTHER" id="PTHR31637">
    <property type="entry name" value="2,3-BISPHOSPHOGLYCERATE-INDEPENDENT PHOSPHOGLYCERATE MUTASE"/>
    <property type="match status" value="1"/>
</dbReference>
<dbReference type="PANTHER" id="PTHR31637:SF0">
    <property type="entry name" value="2,3-BISPHOSPHOGLYCERATE-INDEPENDENT PHOSPHOGLYCERATE MUTASE"/>
    <property type="match status" value="1"/>
</dbReference>
<dbReference type="Pfam" id="PF06415">
    <property type="entry name" value="iPGM_N"/>
    <property type="match status" value="1"/>
</dbReference>
<dbReference type="Pfam" id="PF01676">
    <property type="entry name" value="Metalloenzyme"/>
    <property type="match status" value="1"/>
</dbReference>
<dbReference type="PIRSF" id="PIRSF001492">
    <property type="entry name" value="IPGAM"/>
    <property type="match status" value="1"/>
</dbReference>
<dbReference type="SUPFAM" id="SSF64158">
    <property type="entry name" value="2,3-Bisphosphoglycerate-independent phosphoglycerate mutase, substrate-binding domain"/>
    <property type="match status" value="1"/>
</dbReference>
<dbReference type="SUPFAM" id="SSF53649">
    <property type="entry name" value="Alkaline phosphatase-like"/>
    <property type="match status" value="1"/>
</dbReference>
<sequence length="548" mass="61053">MKLSKKYTFRSRKVLLIILDGVGYSPKGPESGNAIAGAKLPFLNRVWNQFPTLHIQAHGKAVGMPSDDDMGNSEVGHNVLGSGRIFDQGAKLVSNSIASGDIFNGQAWKEVIGNSKKNNSTLHLLGLFSDGNVHSHIDHTKALISQAILEKVPKIRLHILLDGRDVPEKSALDYLNPFETWLDSLRKSGTDIRIASGGGRMTITMDRYEADWSMVERGWKVHVKGEGRYFSSAKEAIETFRSENPKIIDQYLPSFVISDNGKPVGKIQDGDSVVFTNFRGDRAIEISLAFTEKNFDKFDRGPLPNVLYAGIMQYDGDLKLPERFLVAPPAIDRTLGEYMASSNIPQYALSETQKYGHVTYFWNGNKSGYFDQNSEEYREILSDVIPFDQSPEMKALLITEALEKALNENKQDFYRVNYANGDMVGHTGNYLATVQAMEFLDGCVERLWKTCEKQNIVLLVTADHGNADEMFQLDKKGNVEKDSHGNPIPKTSHTLNPVPISILDPENKIRFNSKLSNPGLANVAATILDVMGYETPEGYHPSLIQNES</sequence>
<keyword id="KW-0324">Glycolysis</keyword>
<keyword id="KW-0413">Isomerase</keyword>
<keyword id="KW-0464">Manganese</keyword>
<keyword id="KW-0479">Metal-binding</keyword>
<keyword id="KW-1185">Reference proteome</keyword>
<name>GPMI_LEPIN</name>
<evidence type="ECO:0000250" key="1">
    <source>
        <dbReference type="UniProtKB" id="Q9X519"/>
    </source>
</evidence>
<evidence type="ECO:0000305" key="2"/>
<gene>
    <name type="primary">gpmI</name>
    <name type="synonym">pmgI</name>
    <name type="ordered locus">LA_0439</name>
</gene>
<feature type="chain" id="PRO_0000212160" description="Probable 2,3-bisphosphoglycerate-independent phosphoglycerate mutase">
    <location>
        <begin position="1"/>
        <end position="548"/>
    </location>
</feature>
<feature type="active site" description="Phosphoserine intermediate" evidence="1">
    <location>
        <position position="73"/>
    </location>
</feature>
<feature type="binding site" evidence="1">
    <location>
        <position position="20"/>
    </location>
    <ligand>
        <name>Mn(2+)</name>
        <dbReference type="ChEBI" id="CHEBI:29035"/>
        <label>2</label>
    </ligand>
</feature>
<feature type="binding site" evidence="1">
    <location>
        <position position="73"/>
    </location>
    <ligand>
        <name>Mn(2+)</name>
        <dbReference type="ChEBI" id="CHEBI:29035"/>
        <label>2</label>
    </ligand>
</feature>
<feature type="binding site" evidence="1">
    <location>
        <position position="134"/>
    </location>
    <ligand>
        <name>substrate</name>
    </ligand>
</feature>
<feature type="binding site" evidence="1">
    <location>
        <begin position="164"/>
        <end position="165"/>
    </location>
    <ligand>
        <name>substrate</name>
    </ligand>
</feature>
<feature type="binding site" evidence="1">
    <location>
        <position position="200"/>
    </location>
    <ligand>
        <name>substrate</name>
    </ligand>
</feature>
<feature type="binding site" evidence="1">
    <location>
        <position position="207"/>
    </location>
    <ligand>
        <name>substrate</name>
    </ligand>
</feature>
<feature type="binding site" evidence="1">
    <location>
        <begin position="279"/>
        <end position="282"/>
    </location>
    <ligand>
        <name>substrate</name>
    </ligand>
</feature>
<feature type="binding site" evidence="1">
    <location>
        <position position="354"/>
    </location>
    <ligand>
        <name>substrate</name>
    </ligand>
</feature>
<feature type="binding site" evidence="1">
    <location>
        <position position="422"/>
    </location>
    <ligand>
        <name>Mn(2+)</name>
        <dbReference type="ChEBI" id="CHEBI:29035"/>
        <label>1</label>
    </ligand>
</feature>
<feature type="binding site" evidence="1">
    <location>
        <position position="426"/>
    </location>
    <ligand>
        <name>Mn(2+)</name>
        <dbReference type="ChEBI" id="CHEBI:29035"/>
        <label>1</label>
    </ligand>
</feature>
<feature type="binding site" evidence="1">
    <location>
        <position position="463"/>
    </location>
    <ligand>
        <name>Mn(2+)</name>
        <dbReference type="ChEBI" id="CHEBI:29035"/>
        <label>2</label>
    </ligand>
</feature>
<feature type="binding site" evidence="1">
    <location>
        <position position="464"/>
    </location>
    <ligand>
        <name>Mn(2+)</name>
        <dbReference type="ChEBI" id="CHEBI:29035"/>
        <label>2</label>
    </ligand>
</feature>
<feature type="binding site" evidence="1">
    <location>
        <position position="493"/>
    </location>
    <ligand>
        <name>Mn(2+)</name>
        <dbReference type="ChEBI" id="CHEBI:29035"/>
        <label>1</label>
    </ligand>
</feature>
<reference key="1">
    <citation type="journal article" date="2003" name="Nature">
        <title>Unique physiological and pathogenic features of Leptospira interrogans revealed by whole-genome sequencing.</title>
        <authorList>
            <person name="Ren S.-X."/>
            <person name="Fu G."/>
            <person name="Jiang X.-G."/>
            <person name="Zeng R."/>
            <person name="Miao Y.-G."/>
            <person name="Xu H."/>
            <person name="Zhang Y.-X."/>
            <person name="Xiong H."/>
            <person name="Lu G."/>
            <person name="Lu L.-F."/>
            <person name="Jiang H.-Q."/>
            <person name="Jia J."/>
            <person name="Tu Y.-F."/>
            <person name="Jiang J.-X."/>
            <person name="Gu W.-Y."/>
            <person name="Zhang Y.-Q."/>
            <person name="Cai Z."/>
            <person name="Sheng H.-H."/>
            <person name="Yin H.-F."/>
            <person name="Zhang Y."/>
            <person name="Zhu G.-F."/>
            <person name="Wan M."/>
            <person name="Huang H.-L."/>
            <person name="Qian Z."/>
            <person name="Wang S.-Y."/>
            <person name="Ma W."/>
            <person name="Yao Z.-J."/>
            <person name="Shen Y."/>
            <person name="Qiang B.-Q."/>
            <person name="Xia Q.-C."/>
            <person name="Guo X.-K."/>
            <person name="Danchin A."/>
            <person name="Saint Girons I."/>
            <person name="Somerville R.L."/>
            <person name="Wen Y.-M."/>
            <person name="Shi M.-H."/>
            <person name="Chen Z."/>
            <person name="Xu J.-G."/>
            <person name="Zhao G.-P."/>
        </authorList>
    </citation>
    <scope>NUCLEOTIDE SEQUENCE [LARGE SCALE GENOMIC DNA]</scope>
    <source>
        <strain>56601</strain>
    </source>
</reference>